<reference key="1">
    <citation type="journal article" date="1997" name="Eur. J. Biochem.">
        <title>Gloverin, an antibacterial protein from the immune hemolymph of Hyalophora pupae.</title>
        <authorList>
            <person name="Axen A."/>
            <person name="Carlsson A."/>
            <person name="Engstroem A."/>
            <person name="Bennich H."/>
        </authorList>
    </citation>
    <scope>PROTEIN SEQUENCE</scope>
    <source>
        <tissue>Pupae</tissue>
    </source>
</reference>
<comment type="function">
    <text>Antibacterial protein active against Gram-negative bacteria.</text>
</comment>
<comment type="subcellular location">
    <subcellularLocation>
        <location>Secreted</location>
    </subcellularLocation>
</comment>
<comment type="tissue specificity">
    <text>Hemolymph.</text>
</comment>
<dbReference type="GO" id="GO:0005576">
    <property type="term" value="C:extracellular region"/>
    <property type="evidence" value="ECO:0007669"/>
    <property type="project" value="UniProtKB-SubCell"/>
</dbReference>
<dbReference type="GO" id="GO:0042742">
    <property type="term" value="P:defense response to bacterium"/>
    <property type="evidence" value="ECO:0007669"/>
    <property type="project" value="UniProtKB-KW"/>
</dbReference>
<dbReference type="GO" id="GO:0045087">
    <property type="term" value="P:innate immune response"/>
    <property type="evidence" value="ECO:0007669"/>
    <property type="project" value="UniProtKB-KW"/>
</dbReference>
<dbReference type="InterPro" id="IPR019729">
    <property type="entry name" value="Gloverin-like_protein"/>
</dbReference>
<dbReference type="Pfam" id="PF10793">
    <property type="entry name" value="Gloverin"/>
    <property type="match status" value="1"/>
</dbReference>
<organism>
    <name type="scientific">Hyalophora cecropia</name>
    <name type="common">Cecropia moth</name>
    <name type="synonym">Samia cecropia</name>
    <dbReference type="NCBI Taxonomy" id="7123"/>
    <lineage>
        <taxon>Eukaryota</taxon>
        <taxon>Metazoa</taxon>
        <taxon>Ecdysozoa</taxon>
        <taxon>Arthropoda</taxon>
        <taxon>Hexapoda</taxon>
        <taxon>Insecta</taxon>
        <taxon>Pterygota</taxon>
        <taxon>Neoptera</taxon>
        <taxon>Endopterygota</taxon>
        <taxon>Lepidoptera</taxon>
        <taxon>Glossata</taxon>
        <taxon>Ditrysia</taxon>
        <taxon>Bombycoidea</taxon>
        <taxon>Saturniidae</taxon>
        <taxon>Saturniinae</taxon>
        <taxon>Attacini</taxon>
        <taxon>Hyalophora</taxon>
    </lineage>
</organism>
<protein>
    <recommendedName>
        <fullName>Gloverin</fullName>
    </recommendedName>
</protein>
<keyword id="KW-0044">Antibiotic</keyword>
<keyword id="KW-0929">Antimicrobial</keyword>
<keyword id="KW-0903">Direct protein sequencing</keyword>
<keyword id="KW-0391">Immunity</keyword>
<keyword id="KW-0399">Innate immunity</keyword>
<keyword id="KW-0964">Secreted</keyword>
<sequence length="130" mass="13785">DVTWDKNIGNGKVFGTLGQNDDGLFGKAGFKQQFFNDDRGKFEGQAYGTRVLGPAGGTTNFGGRLDWSDKNANAALDISKQIGGRPNLSASGAGVWDFDKNTRLSAGGSLSTMGRGKPDVGVHAQFQHDF</sequence>
<proteinExistence type="evidence at protein level"/>
<accession>P81048</accession>
<name>GLOV_HYACE</name>
<feature type="chain" id="PRO_0000127111" description="Gloverin">
    <location>
        <begin position="1"/>
        <end position="130"/>
    </location>
</feature>